<organism>
    <name type="scientific">Caldanaerobacter subterraneus subsp. tengcongensis (strain DSM 15242 / JCM 11007 / NBRC 100824 / MB4)</name>
    <name type="common">Thermoanaerobacter tengcongensis</name>
    <dbReference type="NCBI Taxonomy" id="273068"/>
    <lineage>
        <taxon>Bacteria</taxon>
        <taxon>Bacillati</taxon>
        <taxon>Bacillota</taxon>
        <taxon>Clostridia</taxon>
        <taxon>Thermoanaerobacterales</taxon>
        <taxon>Thermoanaerobacteraceae</taxon>
        <taxon>Caldanaerobacter</taxon>
    </lineage>
</organism>
<reference key="1">
    <citation type="journal article" date="2002" name="Genome Res.">
        <title>A complete sequence of the T. tengcongensis genome.</title>
        <authorList>
            <person name="Bao Q."/>
            <person name="Tian Y."/>
            <person name="Li W."/>
            <person name="Xu Z."/>
            <person name="Xuan Z."/>
            <person name="Hu S."/>
            <person name="Dong W."/>
            <person name="Yang J."/>
            <person name="Chen Y."/>
            <person name="Xue Y."/>
            <person name="Xu Y."/>
            <person name="Lai X."/>
            <person name="Huang L."/>
            <person name="Dong X."/>
            <person name="Ma Y."/>
            <person name="Ling L."/>
            <person name="Tan H."/>
            <person name="Chen R."/>
            <person name="Wang J."/>
            <person name="Yu J."/>
            <person name="Yang H."/>
        </authorList>
    </citation>
    <scope>NUCLEOTIDE SEQUENCE [LARGE SCALE GENOMIC DNA]</scope>
    <source>
        <strain>DSM 15242 / JCM 11007 / NBRC 100824 / MB4</strain>
    </source>
</reference>
<protein>
    <recommendedName>
        <fullName evidence="1">Aspartate carbamoyltransferase catalytic subunit</fullName>
        <ecNumber evidence="1">2.1.3.2</ecNumber>
    </recommendedName>
    <alternativeName>
        <fullName evidence="1">Aspartate transcarbamylase</fullName>
        <shortName evidence="1">ATCase</shortName>
    </alternativeName>
</protein>
<name>PYRB_CALS4</name>
<gene>
    <name evidence="1" type="primary">pyrB</name>
    <name type="ordered locus">TTE1534</name>
</gene>
<accession>Q8R9R5</accession>
<feature type="chain" id="PRO_0000113222" description="Aspartate carbamoyltransferase catalytic subunit">
    <location>
        <begin position="1"/>
        <end position="304"/>
    </location>
</feature>
<feature type="binding site" evidence="1">
    <location>
        <position position="55"/>
    </location>
    <ligand>
        <name>carbamoyl phosphate</name>
        <dbReference type="ChEBI" id="CHEBI:58228"/>
    </ligand>
</feature>
<feature type="binding site" evidence="1">
    <location>
        <position position="56"/>
    </location>
    <ligand>
        <name>carbamoyl phosphate</name>
        <dbReference type="ChEBI" id="CHEBI:58228"/>
    </ligand>
</feature>
<feature type="binding site" evidence="1">
    <location>
        <position position="83"/>
    </location>
    <ligand>
        <name>L-aspartate</name>
        <dbReference type="ChEBI" id="CHEBI:29991"/>
    </ligand>
</feature>
<feature type="binding site" evidence="1">
    <location>
        <position position="105"/>
    </location>
    <ligand>
        <name>carbamoyl phosphate</name>
        <dbReference type="ChEBI" id="CHEBI:58228"/>
    </ligand>
</feature>
<feature type="binding site" evidence="1">
    <location>
        <position position="133"/>
    </location>
    <ligand>
        <name>carbamoyl phosphate</name>
        <dbReference type="ChEBI" id="CHEBI:58228"/>
    </ligand>
</feature>
<feature type="binding site" evidence="1">
    <location>
        <position position="136"/>
    </location>
    <ligand>
        <name>carbamoyl phosphate</name>
        <dbReference type="ChEBI" id="CHEBI:58228"/>
    </ligand>
</feature>
<feature type="binding site" evidence="1">
    <location>
        <position position="166"/>
    </location>
    <ligand>
        <name>L-aspartate</name>
        <dbReference type="ChEBI" id="CHEBI:29991"/>
    </ligand>
</feature>
<feature type="binding site" evidence="1">
    <location>
        <position position="220"/>
    </location>
    <ligand>
        <name>L-aspartate</name>
        <dbReference type="ChEBI" id="CHEBI:29991"/>
    </ligand>
</feature>
<feature type="binding site" evidence="1">
    <location>
        <position position="261"/>
    </location>
    <ligand>
        <name>carbamoyl phosphate</name>
        <dbReference type="ChEBI" id="CHEBI:58228"/>
    </ligand>
</feature>
<feature type="binding site" evidence="1">
    <location>
        <position position="262"/>
    </location>
    <ligand>
        <name>carbamoyl phosphate</name>
        <dbReference type="ChEBI" id="CHEBI:58228"/>
    </ligand>
</feature>
<proteinExistence type="inferred from homology"/>
<keyword id="KW-0665">Pyrimidine biosynthesis</keyword>
<keyword id="KW-1185">Reference proteome</keyword>
<keyword id="KW-0808">Transferase</keyword>
<evidence type="ECO:0000255" key="1">
    <source>
        <dbReference type="HAMAP-Rule" id="MF_00001"/>
    </source>
</evidence>
<comment type="function">
    <text evidence="1">Catalyzes the condensation of carbamoyl phosphate and aspartate to form carbamoyl aspartate and inorganic phosphate, the committed step in the de novo pyrimidine nucleotide biosynthesis pathway.</text>
</comment>
<comment type="catalytic activity">
    <reaction evidence="1">
        <text>carbamoyl phosphate + L-aspartate = N-carbamoyl-L-aspartate + phosphate + H(+)</text>
        <dbReference type="Rhea" id="RHEA:20013"/>
        <dbReference type="ChEBI" id="CHEBI:15378"/>
        <dbReference type="ChEBI" id="CHEBI:29991"/>
        <dbReference type="ChEBI" id="CHEBI:32814"/>
        <dbReference type="ChEBI" id="CHEBI:43474"/>
        <dbReference type="ChEBI" id="CHEBI:58228"/>
        <dbReference type="EC" id="2.1.3.2"/>
    </reaction>
</comment>
<comment type="pathway">
    <text evidence="1">Pyrimidine metabolism; UMP biosynthesis via de novo pathway; (S)-dihydroorotate from bicarbonate: step 2/3.</text>
</comment>
<comment type="subunit">
    <text evidence="1">Heterododecamer (2C3:3R2) of six catalytic PyrB chains organized as two trimers (C3), and six regulatory PyrI chains organized as three dimers (R2).</text>
</comment>
<comment type="similarity">
    <text evidence="1">Belongs to the aspartate/ornithine carbamoyltransferase superfamily. ATCase family.</text>
</comment>
<sequence>MLKKDLLGIKDLTREEILEILDLAFEMKKLLNGEKYSQALRGKTVVTIFFEPSTRTRLSFEMAAKYLGAHYGNIEVATSSVVKGESLIDTIRTVERMKADVIVTRHNMSGTPHLLAKYTNASIINGGDGINEHPTQALLDMMTIKEKKGDFKGLKVAIIGDIMHSRVARSNIWGLKKLGAEVKVAGPSTLMPPQIEKMGVKVCYNAEEAIKDADVVMGLRIQLERQKSGLFPSIEEYREYFGINEERMRLAKSDAILMHPGPINRNVEVTSGAANASYSVIEEQITNGVAVRMALLKILCERRN</sequence>
<dbReference type="EC" id="2.1.3.2" evidence="1"/>
<dbReference type="EMBL" id="AE008691">
    <property type="protein sequence ID" value="AAM24745.1"/>
    <property type="molecule type" value="Genomic_DNA"/>
</dbReference>
<dbReference type="RefSeq" id="WP_011025782.1">
    <property type="nucleotide sequence ID" value="NC_003869.1"/>
</dbReference>
<dbReference type="SMR" id="Q8R9R5"/>
<dbReference type="STRING" id="273068.TTE1534"/>
<dbReference type="KEGG" id="tte:TTE1534"/>
<dbReference type="eggNOG" id="COG0540">
    <property type="taxonomic scope" value="Bacteria"/>
</dbReference>
<dbReference type="HOGENOM" id="CLU_043846_2_0_9"/>
<dbReference type="OrthoDB" id="9802587at2"/>
<dbReference type="UniPathway" id="UPA00070">
    <property type="reaction ID" value="UER00116"/>
</dbReference>
<dbReference type="Proteomes" id="UP000000555">
    <property type="component" value="Chromosome"/>
</dbReference>
<dbReference type="GO" id="GO:0005829">
    <property type="term" value="C:cytosol"/>
    <property type="evidence" value="ECO:0007669"/>
    <property type="project" value="TreeGrafter"/>
</dbReference>
<dbReference type="GO" id="GO:0016597">
    <property type="term" value="F:amino acid binding"/>
    <property type="evidence" value="ECO:0007669"/>
    <property type="project" value="InterPro"/>
</dbReference>
<dbReference type="GO" id="GO:0004070">
    <property type="term" value="F:aspartate carbamoyltransferase activity"/>
    <property type="evidence" value="ECO:0007669"/>
    <property type="project" value="UniProtKB-UniRule"/>
</dbReference>
<dbReference type="GO" id="GO:0006207">
    <property type="term" value="P:'de novo' pyrimidine nucleobase biosynthetic process"/>
    <property type="evidence" value="ECO:0007669"/>
    <property type="project" value="InterPro"/>
</dbReference>
<dbReference type="GO" id="GO:0044205">
    <property type="term" value="P:'de novo' UMP biosynthetic process"/>
    <property type="evidence" value="ECO:0007669"/>
    <property type="project" value="UniProtKB-UniRule"/>
</dbReference>
<dbReference type="GO" id="GO:0006520">
    <property type="term" value="P:amino acid metabolic process"/>
    <property type="evidence" value="ECO:0007669"/>
    <property type="project" value="InterPro"/>
</dbReference>
<dbReference type="FunFam" id="3.40.50.1370:FF:000007">
    <property type="entry name" value="Aspartate carbamoyltransferase"/>
    <property type="match status" value="1"/>
</dbReference>
<dbReference type="Gene3D" id="3.40.50.1370">
    <property type="entry name" value="Aspartate/ornithine carbamoyltransferase"/>
    <property type="match status" value="2"/>
</dbReference>
<dbReference type="HAMAP" id="MF_00001">
    <property type="entry name" value="Asp_carb_tr"/>
    <property type="match status" value="1"/>
</dbReference>
<dbReference type="InterPro" id="IPR006132">
    <property type="entry name" value="Asp/Orn_carbamoyltranf_P-bd"/>
</dbReference>
<dbReference type="InterPro" id="IPR006130">
    <property type="entry name" value="Asp/Orn_carbamoylTrfase"/>
</dbReference>
<dbReference type="InterPro" id="IPR036901">
    <property type="entry name" value="Asp/Orn_carbamoylTrfase_sf"/>
</dbReference>
<dbReference type="InterPro" id="IPR002082">
    <property type="entry name" value="Asp_carbamoyltransf"/>
</dbReference>
<dbReference type="InterPro" id="IPR006131">
    <property type="entry name" value="Asp_carbamoyltransf_Asp/Orn-bd"/>
</dbReference>
<dbReference type="NCBIfam" id="TIGR00670">
    <property type="entry name" value="asp_carb_tr"/>
    <property type="match status" value="1"/>
</dbReference>
<dbReference type="NCBIfam" id="NF002032">
    <property type="entry name" value="PRK00856.1"/>
    <property type="match status" value="1"/>
</dbReference>
<dbReference type="PANTHER" id="PTHR45753:SF6">
    <property type="entry name" value="ASPARTATE CARBAMOYLTRANSFERASE"/>
    <property type="match status" value="1"/>
</dbReference>
<dbReference type="PANTHER" id="PTHR45753">
    <property type="entry name" value="ORNITHINE CARBAMOYLTRANSFERASE, MITOCHONDRIAL"/>
    <property type="match status" value="1"/>
</dbReference>
<dbReference type="Pfam" id="PF00185">
    <property type="entry name" value="OTCace"/>
    <property type="match status" value="1"/>
</dbReference>
<dbReference type="Pfam" id="PF02729">
    <property type="entry name" value="OTCace_N"/>
    <property type="match status" value="1"/>
</dbReference>
<dbReference type="PRINTS" id="PR00100">
    <property type="entry name" value="AOTCASE"/>
</dbReference>
<dbReference type="PRINTS" id="PR00101">
    <property type="entry name" value="ATCASE"/>
</dbReference>
<dbReference type="SUPFAM" id="SSF53671">
    <property type="entry name" value="Aspartate/ornithine carbamoyltransferase"/>
    <property type="match status" value="1"/>
</dbReference>
<dbReference type="PROSITE" id="PS00097">
    <property type="entry name" value="CARBAMOYLTRANSFERASE"/>
    <property type="match status" value="1"/>
</dbReference>